<evidence type="ECO:0000255" key="1"/>
<evidence type="ECO:0000305" key="2"/>
<evidence type="ECO:0000312" key="3">
    <source>
        <dbReference type="HGNC" id="HGNC:53905"/>
    </source>
</evidence>
<keyword id="KW-1185">Reference proteome</keyword>
<keyword id="KW-0964">Secreted</keyword>
<keyword id="KW-0732">Signal</keyword>
<feature type="signal peptide" evidence="1">
    <location>
        <begin position="1"/>
        <end position="13"/>
    </location>
</feature>
<feature type="chain" id="PRO_0000445587" description="Oocyte-secreted protein 4B" evidence="1">
    <location>
        <begin position="14"/>
        <end position="160"/>
    </location>
</feature>
<proteinExistence type="inferred from homology"/>
<name>OSP4B_HUMAN</name>
<organism>
    <name type="scientific">Homo sapiens</name>
    <name type="common">Human</name>
    <dbReference type="NCBI Taxonomy" id="9606"/>
    <lineage>
        <taxon>Eukaryota</taxon>
        <taxon>Metazoa</taxon>
        <taxon>Chordata</taxon>
        <taxon>Craniata</taxon>
        <taxon>Vertebrata</taxon>
        <taxon>Euteleostomi</taxon>
        <taxon>Mammalia</taxon>
        <taxon>Eutheria</taxon>
        <taxon>Euarchontoglires</taxon>
        <taxon>Primates</taxon>
        <taxon>Haplorrhini</taxon>
        <taxon>Catarrhini</taxon>
        <taxon>Hominidae</taxon>
        <taxon>Homo</taxon>
    </lineage>
</organism>
<protein>
    <recommendedName>
        <fullName evidence="2">Oocyte-secreted protein 4B</fullName>
    </recommendedName>
</protein>
<dbReference type="EMBL" id="AP000790">
    <property type="status" value="NOT_ANNOTATED_CDS"/>
    <property type="molecule type" value="Genomic_DNA"/>
</dbReference>
<dbReference type="RefSeq" id="NP_001382207.2">
    <property type="nucleotide sequence ID" value="NM_001395278.3"/>
</dbReference>
<dbReference type="SMR" id="A0A2R8Y4Y8"/>
<dbReference type="STRING" id="9606.ENSP00000494382"/>
<dbReference type="GlyGen" id="A0A2R8Y4Y8">
    <property type="glycosylation" value="1 site"/>
</dbReference>
<dbReference type="jPOST" id="A0A2R8Y4Y8"/>
<dbReference type="MassIVE" id="A0A2R8Y4Y8"/>
<dbReference type="Ensembl" id="ENST00000642343.2">
    <property type="protein sequence ID" value="ENSP00000494382.1"/>
    <property type="gene ID" value="ENSG00000255393.3"/>
</dbReference>
<dbReference type="Ensembl" id="ENST00000645128.1">
    <property type="protein sequence ID" value="ENSP00000496668.1"/>
    <property type="gene ID" value="ENSG00000285463.1"/>
</dbReference>
<dbReference type="GeneID" id="107987155"/>
<dbReference type="MANE-Select" id="ENST00000642343.2">
    <property type="protein sequence ID" value="ENSP00000494382.1"/>
    <property type="RefSeq nucleotide sequence ID" value="NM_001395278.3"/>
    <property type="RefSeq protein sequence ID" value="NP_001382207.2"/>
</dbReference>
<dbReference type="AGR" id="HGNC:53905"/>
<dbReference type="GeneCards" id="OOSP4B"/>
<dbReference type="HGNC" id="HGNC:53905">
    <property type="gene designation" value="OOSP4B"/>
</dbReference>
<dbReference type="HPA" id="ENSG00000255393">
    <property type="expression patterns" value="Not detected"/>
</dbReference>
<dbReference type="neXtProt" id="NX_A0A2R8Y4Y8"/>
<dbReference type="VEuPathDB" id="HostDB:ENSG00000255393"/>
<dbReference type="GeneTree" id="ENSGT00960000193303"/>
<dbReference type="InParanoid" id="A0A2R8Y4Y8"/>
<dbReference type="OMA" id="HTTYEFP"/>
<dbReference type="OrthoDB" id="9535490at2759"/>
<dbReference type="PAN-GO" id="A0A2R8Y4Y8">
    <property type="GO annotations" value="0 GO annotations based on evolutionary models"/>
</dbReference>
<dbReference type="Pharos" id="A0A2R8Y4Y8">
    <property type="development level" value="Tdark"/>
</dbReference>
<dbReference type="PRO" id="PR:A0A2R8Y4Y8"/>
<dbReference type="Proteomes" id="UP000005640">
    <property type="component" value="Chromosome 11"/>
</dbReference>
<dbReference type="Bgee" id="ENSG00000255393">
    <property type="expression patterns" value="Expressed in male germ line stem cell (sensu Vertebrata) in testis and 2 other cell types or tissues"/>
</dbReference>
<dbReference type="GO" id="GO:0005576">
    <property type="term" value="C:extracellular region"/>
    <property type="evidence" value="ECO:0007669"/>
    <property type="project" value="UniProtKB-SubCell"/>
</dbReference>
<dbReference type="InterPro" id="IPR033222">
    <property type="entry name" value="PLAC1_fam"/>
</dbReference>
<dbReference type="PANTHER" id="PTHR14380:SF9">
    <property type="entry name" value="OOCYTE-SECRETED PROTEIN 4B"/>
    <property type="match status" value="1"/>
</dbReference>
<dbReference type="PANTHER" id="PTHR14380">
    <property type="entry name" value="PLACENTA-SPECIFIC PROTEIN 1"/>
    <property type="match status" value="1"/>
</dbReference>
<sequence length="160" mass="18448">MKTSVLLAITAMCSDDWLLVRMKIRPFDKNTDIRIGDIHLRDNCPVTRLLSFNYAFSYPVTSCGIKKIMFQTNDDAILSEISYKPRLHTTYEFPVVCFVKRLKFPSVMHFGMSGFDAHTLKEIPQKTKGQESPTPTQSKTWTLNFNSVNKEQLSKKSLYQ</sequence>
<gene>
    <name evidence="3" type="primary">OOSP4B</name>
</gene>
<reference key="1">
    <citation type="journal article" date="2006" name="Nature">
        <title>Human chromosome 11 DNA sequence and analysis including novel gene identification.</title>
        <authorList>
            <person name="Taylor T.D."/>
            <person name="Noguchi H."/>
            <person name="Totoki Y."/>
            <person name="Toyoda A."/>
            <person name="Kuroki Y."/>
            <person name="Dewar K."/>
            <person name="Lloyd C."/>
            <person name="Itoh T."/>
            <person name="Takeda T."/>
            <person name="Kim D.-W."/>
            <person name="She X."/>
            <person name="Barlow K.F."/>
            <person name="Bloom T."/>
            <person name="Bruford E."/>
            <person name="Chang J.L."/>
            <person name="Cuomo C.A."/>
            <person name="Eichler E."/>
            <person name="FitzGerald M.G."/>
            <person name="Jaffe D.B."/>
            <person name="LaButti K."/>
            <person name="Nicol R."/>
            <person name="Park H.-S."/>
            <person name="Seaman C."/>
            <person name="Sougnez C."/>
            <person name="Yang X."/>
            <person name="Zimmer A.R."/>
            <person name="Zody M.C."/>
            <person name="Birren B.W."/>
            <person name="Nusbaum C."/>
            <person name="Fujiyama A."/>
            <person name="Hattori M."/>
            <person name="Rogers J."/>
            <person name="Lander E.S."/>
            <person name="Sakaki Y."/>
        </authorList>
    </citation>
    <scope>NUCLEOTIDE SEQUENCE [LARGE SCALE GENOMIC DNA]</scope>
</reference>
<comment type="subcellular location">
    <subcellularLocation>
        <location evidence="2">Secreted</location>
    </subcellularLocation>
</comment>
<comment type="similarity">
    <text evidence="2">Belongs to the PLAC1 family.</text>
</comment>
<accession>A0A2R8Y4Y8</accession>